<feature type="signal peptide" evidence="2">
    <location>
        <begin position="1"/>
        <end position="19"/>
    </location>
</feature>
<feature type="propeptide" id="PRO_0000413798">
    <location>
        <begin position="20"/>
        <end position="42"/>
    </location>
</feature>
<feature type="chain" id="PRO_0000413799" description="Phospholipase A2 A2-actitoxin-Ucs2a">
    <location>
        <begin position="45"/>
        <end position="155"/>
    </location>
</feature>
<feature type="active site" evidence="1">
    <location>
        <position position="90"/>
    </location>
</feature>
<feature type="active site" evidence="1">
    <location>
        <position position="137"/>
    </location>
</feature>
<feature type="binding site" evidence="1">
    <location>
        <position position="72"/>
    </location>
    <ligand>
        <name>Ca(2+)</name>
        <dbReference type="ChEBI" id="CHEBI:29108"/>
    </ligand>
</feature>
<feature type="binding site" evidence="1">
    <location>
        <position position="74"/>
    </location>
    <ligand>
        <name>Ca(2+)</name>
        <dbReference type="ChEBI" id="CHEBI:29108"/>
    </ligand>
</feature>
<feature type="binding site" evidence="1">
    <location>
        <position position="91"/>
    </location>
    <ligand>
        <name>Ca(2+)</name>
        <dbReference type="ChEBI" id="CHEBI:29108"/>
    </ligand>
</feature>
<feature type="disulfide bond" evidence="1">
    <location>
        <begin position="55"/>
        <end position="118"/>
    </location>
</feature>
<feature type="disulfide bond" evidence="1">
    <location>
        <begin position="71"/>
        <end position="87"/>
    </location>
</feature>
<feature type="disulfide bond" evidence="1">
    <location>
        <begin position="86"/>
        <end position="143"/>
    </location>
</feature>
<feature type="disulfide bond" evidence="1">
    <location>
        <begin position="93"/>
        <end position="136"/>
    </location>
</feature>
<feature type="disulfide bond" evidence="1">
    <location>
        <begin position="100"/>
        <end position="129"/>
    </location>
</feature>
<feature type="disulfide bond" evidence="1">
    <location>
        <begin position="122"/>
        <end position="134"/>
    </location>
</feature>
<feature type="sequence conflict" description="In Ref. 1; AA sequence." evidence="8" ref="1">
    <original>DI</original>
    <variation>NL</variation>
    <location>
        <begin position="45"/>
        <end position="46"/>
    </location>
</feature>
<feature type="sequence conflict" description="In Ref. 1; AA sequence." evidence="8" ref="1">
    <original>G</original>
    <variation>S</variation>
    <location>
        <position position="51"/>
    </location>
</feature>
<feature type="sequence conflict" description="In Ref. 1; AA sequence." evidence="8" ref="1">
    <original>R</original>
    <variation>K</variation>
    <location>
        <position position="54"/>
    </location>
</feature>
<feature type="sequence conflict" description="In Ref. 1; AA sequence." evidence="8" ref="1">
    <original>F</original>
    <variation>D</variation>
    <location>
        <position position="65"/>
    </location>
</feature>
<keyword id="KW-0106">Calcium</keyword>
<keyword id="KW-0165">Cleavage on pair of basic residues</keyword>
<keyword id="KW-0903">Direct protein sequencing</keyword>
<keyword id="KW-1015">Disulfide bond</keyword>
<keyword id="KW-0378">Hydrolase</keyword>
<keyword id="KW-0442">Lipid degradation</keyword>
<keyword id="KW-0443">Lipid metabolism</keyword>
<keyword id="KW-0479">Metal-binding</keyword>
<keyword id="KW-0166">Nematocyst</keyword>
<keyword id="KW-0964">Secreted</keyword>
<keyword id="KW-0732">Signal</keyword>
<keyword id="KW-0800">Toxin</keyword>
<dbReference type="EC" id="3.1.1.4" evidence="5"/>
<dbReference type="EMBL" id="EU003992">
    <property type="protein sequence ID" value="ABS19666.1"/>
    <property type="molecule type" value="mRNA"/>
</dbReference>
<dbReference type="SMR" id="A7LCJ2"/>
<dbReference type="GO" id="GO:0005576">
    <property type="term" value="C:extracellular region"/>
    <property type="evidence" value="ECO:0007669"/>
    <property type="project" value="UniProtKB-SubCell"/>
</dbReference>
<dbReference type="GO" id="GO:0042151">
    <property type="term" value="C:nematocyst"/>
    <property type="evidence" value="ECO:0007669"/>
    <property type="project" value="UniProtKB-SubCell"/>
</dbReference>
<dbReference type="GO" id="GO:0005509">
    <property type="term" value="F:calcium ion binding"/>
    <property type="evidence" value="ECO:0007669"/>
    <property type="project" value="InterPro"/>
</dbReference>
<dbReference type="GO" id="GO:0047498">
    <property type="term" value="F:calcium-dependent phospholipase A2 activity"/>
    <property type="evidence" value="ECO:0007669"/>
    <property type="project" value="TreeGrafter"/>
</dbReference>
<dbReference type="GO" id="GO:0005543">
    <property type="term" value="F:phospholipid binding"/>
    <property type="evidence" value="ECO:0007669"/>
    <property type="project" value="TreeGrafter"/>
</dbReference>
<dbReference type="GO" id="GO:0090729">
    <property type="term" value="F:toxin activity"/>
    <property type="evidence" value="ECO:0007669"/>
    <property type="project" value="UniProtKB-KW"/>
</dbReference>
<dbReference type="GO" id="GO:0050482">
    <property type="term" value="P:arachidonate secretion"/>
    <property type="evidence" value="ECO:0007669"/>
    <property type="project" value="InterPro"/>
</dbReference>
<dbReference type="GO" id="GO:0016042">
    <property type="term" value="P:lipid catabolic process"/>
    <property type="evidence" value="ECO:0007669"/>
    <property type="project" value="UniProtKB-KW"/>
</dbReference>
<dbReference type="GO" id="GO:0006644">
    <property type="term" value="P:phospholipid metabolic process"/>
    <property type="evidence" value="ECO:0007669"/>
    <property type="project" value="InterPro"/>
</dbReference>
<dbReference type="CDD" id="cd00125">
    <property type="entry name" value="PLA2c"/>
    <property type="match status" value="1"/>
</dbReference>
<dbReference type="Gene3D" id="1.20.90.10">
    <property type="entry name" value="Phospholipase A2 domain"/>
    <property type="match status" value="1"/>
</dbReference>
<dbReference type="InterPro" id="IPR001211">
    <property type="entry name" value="PLipase_A2"/>
</dbReference>
<dbReference type="InterPro" id="IPR033112">
    <property type="entry name" value="PLipase_A2_Asp_AS"/>
</dbReference>
<dbReference type="InterPro" id="IPR016090">
    <property type="entry name" value="PLipase_A2_dom"/>
</dbReference>
<dbReference type="InterPro" id="IPR036444">
    <property type="entry name" value="PLipase_A2_dom_sf"/>
</dbReference>
<dbReference type="InterPro" id="IPR033113">
    <property type="entry name" value="PLipase_A2_His_AS"/>
</dbReference>
<dbReference type="PANTHER" id="PTHR11716:SF51">
    <property type="entry name" value="PHOSPHOLIPASE A2"/>
    <property type="match status" value="1"/>
</dbReference>
<dbReference type="PANTHER" id="PTHR11716">
    <property type="entry name" value="PHOSPHOLIPASE A2 FAMILY MEMBER"/>
    <property type="match status" value="1"/>
</dbReference>
<dbReference type="Pfam" id="PF00068">
    <property type="entry name" value="Phospholip_A2_1"/>
    <property type="match status" value="1"/>
</dbReference>
<dbReference type="PRINTS" id="PR00389">
    <property type="entry name" value="PHPHLIPASEA2"/>
</dbReference>
<dbReference type="SMART" id="SM00085">
    <property type="entry name" value="PA2c"/>
    <property type="match status" value="1"/>
</dbReference>
<dbReference type="SUPFAM" id="SSF48619">
    <property type="entry name" value="Phospholipase A2, PLA2"/>
    <property type="match status" value="1"/>
</dbReference>
<dbReference type="PROSITE" id="PS00119">
    <property type="entry name" value="PA2_ASP"/>
    <property type="match status" value="1"/>
</dbReference>
<dbReference type="PROSITE" id="PS00118">
    <property type="entry name" value="PA2_HIS"/>
    <property type="match status" value="1"/>
</dbReference>
<sequence>MKNNIILVILLGISVFVDCLPLNDQEEDKSLNAQESEVSAVQKRDILQFSGMIRCATGRSAWKYFNYGNWCGWGGSGTAVDGVDSCCRSHDWCYKRHDSCYPKIIPYIASTSGSHPSCSITCHSANNRCQRDVCNCDKVAAECFARNTYHPNNKH</sequence>
<evidence type="ECO:0000250" key="1"/>
<evidence type="ECO:0000255" key="2"/>
<evidence type="ECO:0000255" key="3">
    <source>
        <dbReference type="PROSITE-ProRule" id="PRU10035"/>
    </source>
</evidence>
<evidence type="ECO:0000255" key="4">
    <source>
        <dbReference type="PROSITE-ProRule" id="PRU10036"/>
    </source>
</evidence>
<evidence type="ECO:0000269" key="5">
    <source>
    </source>
</evidence>
<evidence type="ECO:0000303" key="6">
    <source>
    </source>
</evidence>
<evidence type="ECO:0000303" key="7">
    <source>
    </source>
</evidence>
<evidence type="ECO:0000305" key="8"/>
<comment type="function">
    <text evidence="5">PLA2 catalyzes the calcium-dependent hydrolysis of the 2-acyl groups in 3-sn-phosphoglycerides.</text>
</comment>
<comment type="catalytic activity">
    <reaction evidence="3 4 5">
        <text>a 1,2-diacyl-sn-glycero-3-phosphocholine + H2O = a 1-acyl-sn-glycero-3-phosphocholine + a fatty acid + H(+)</text>
        <dbReference type="Rhea" id="RHEA:15801"/>
        <dbReference type="ChEBI" id="CHEBI:15377"/>
        <dbReference type="ChEBI" id="CHEBI:15378"/>
        <dbReference type="ChEBI" id="CHEBI:28868"/>
        <dbReference type="ChEBI" id="CHEBI:57643"/>
        <dbReference type="ChEBI" id="CHEBI:58168"/>
        <dbReference type="EC" id="3.1.1.4"/>
    </reaction>
</comment>
<comment type="cofactor">
    <cofactor evidence="5">
        <name>Ca(2+)</name>
        <dbReference type="ChEBI" id="CHEBI:29108"/>
    </cofactor>
    <text evidence="5">Binds 1 Ca(2+) ion.</text>
</comment>
<comment type="subcellular location">
    <subcellularLocation>
        <location>Secreted</location>
    </subcellularLocation>
    <subcellularLocation>
        <location>Nematocyst</location>
    </subcellularLocation>
</comment>
<comment type="miscellaneous">
    <text evidence="5">Lacks hemolytic activity on bovine red blood cells as well as neurotoxic activities.</text>
</comment>
<comment type="miscellaneous">
    <text evidence="5">mRNA is obtained from a single animal, whereas the protein is isolated from exudates of several specimens.</text>
</comment>
<comment type="similarity">
    <text evidence="8">Belongs to the phospholipase A2 family.</text>
</comment>
<comment type="caution">
    <text evidence="8">Possesses an Asp at position 69 instead of a conserved Cys.</text>
</comment>
<organism>
    <name type="scientific">Urticina crassicornis</name>
    <name type="common">Mottled anemone</name>
    <name type="synonym">Tealia crassicornis</name>
    <dbReference type="NCBI Taxonomy" id="45621"/>
    <lineage>
        <taxon>Eukaryota</taxon>
        <taxon>Metazoa</taxon>
        <taxon>Cnidaria</taxon>
        <taxon>Anthozoa</taxon>
        <taxon>Hexacorallia</taxon>
        <taxon>Actiniaria</taxon>
        <taxon>Actiniidae</taxon>
        <taxon>Urticina</taxon>
    </lineage>
</organism>
<accession>A7LCJ2</accession>
<reference key="1">
    <citation type="journal article" date="2010" name="FEBS J.">
        <title>A new phospholipase A2 isolated from the sea anemone Urticina crassicornis - its primary structure and phylogenetic classification.</title>
        <authorList>
            <person name="Razpotnik A."/>
            <person name="Krizaj I."/>
            <person name="Sribar J."/>
            <person name="Kordis D."/>
            <person name="Macek P."/>
            <person name="Frangez R."/>
            <person name="Kem W.R."/>
            <person name="Turk T."/>
        </authorList>
    </citation>
    <scope>NUCLEOTIDE SEQUENCE [MRNA]</scope>
    <scope>PROTEIN SEQUENCE OF 45-69</scope>
    <scope>FUNCTION</scope>
    <scope>CATALYTIC ACTIVITY</scope>
    <scope>COFACTOR</scope>
    <scope>3D-STRUCTURE MODELING</scope>
    <source>
        <tissue>Tentacle</tissue>
    </source>
</reference>
<reference key="2">
    <citation type="journal article" date="2012" name="Toxicon">
        <title>Development of a rational nomenclature for naming peptide and protein toxins from sea anemones.</title>
        <authorList>
            <person name="Oliveira J.S."/>
            <person name="Fuentes-Silva D."/>
            <person name="King G.F."/>
        </authorList>
    </citation>
    <scope>NOMENCLATURE</scope>
</reference>
<protein>
    <recommendedName>
        <fullName evidence="7">Phospholipase A2 A2-actitoxin-Ucs2a</fullName>
        <shortName evidence="7">A2-AITX-Ucs2a</shortName>
        <ecNumber evidence="5">3.1.1.4</ecNumber>
    </recommendedName>
    <alternativeName>
        <fullName>Phosphatidylcholine 2-acylhydrolase</fullName>
    </alternativeName>
    <alternativeName>
        <fullName evidence="6">UcPLA2</fullName>
    </alternativeName>
</protein>
<name>PA2_URTCR</name>
<proteinExistence type="evidence at protein level"/>